<keyword id="KW-0025">Alternative splicing</keyword>
<keyword id="KW-1017">Isopeptide bond</keyword>
<keyword id="KW-0597">Phosphoprotein</keyword>
<keyword id="KW-1185">Reference proteome</keyword>
<keyword id="KW-0832">Ubl conjugation</keyword>
<sequence>MAAPCGSELPANSPLKIPKMEVLSPASPGDLSDGNPSLSDPSTPRGASPLGPGSAAGSGAAASGGLGLGLGGRGAASSSVSFSPGGGSGGAAAAAAAACRGMSWTPAETNALIAVWGNERLVEARYQQLEGAGTVFGSKAPGPAMYERVSRALAELGYERTPSQCRERIKTLRRCYSRVKEHGVGKRKSSYTFEQLEQVFGQGGWDAQPCQPVLINSSGLYQELESDGSTMEDYSQEDWGNHSQELHGYPTDQELDEMPVSKRTLKIKQESSEEAQKRDTMQNIVQILESVQLKWELFQSWTDFSRLHLSNKLAIFGIGYNTRWKEDIRYHYAEISSQVPLGKRLREYFNSEKPEGRIIMTRVQKMNWKNVYYKFLEITISEARCLELHMEIDWIPIAHSKPTGGNVVQYLLPGGIPKSPGLYAIGYEECIERPLSPDVERHALDPGKEGRVDLETLSAQASLQVEVEPTRIIYCYLGIAEVRTLQQCLFLHFQANAKTFSKEWVGINGFLSQNCIVDPGVSPKSIYIKFVEVERDFLSAGSLVECLEKAIGYPLKFNN</sequence>
<evidence type="ECO:0000250" key="1">
    <source>
        <dbReference type="UniProtKB" id="Q6P1R3"/>
    </source>
</evidence>
<evidence type="ECO:0000256" key="2">
    <source>
        <dbReference type="SAM" id="MobiDB-lite"/>
    </source>
</evidence>
<evidence type="ECO:0000303" key="3">
    <source>
    </source>
</evidence>
<evidence type="ECO:0000303" key="4">
    <source>
    </source>
</evidence>
<evidence type="ECO:0007744" key="5">
    <source>
    </source>
</evidence>
<feature type="chain" id="PRO_0000274302" description="Myb/SANT-like DNA-binding domain-containing protein 2">
    <location>
        <begin position="1"/>
        <end position="559"/>
    </location>
</feature>
<feature type="domain" description="Myb-like">
    <location>
        <begin position="103"/>
        <end position="173"/>
    </location>
</feature>
<feature type="region of interest" description="Disordered" evidence="2">
    <location>
        <begin position="1"/>
        <end position="62"/>
    </location>
</feature>
<feature type="compositionally biased region" description="Low complexity" evidence="2">
    <location>
        <begin position="46"/>
        <end position="61"/>
    </location>
</feature>
<feature type="modified residue" description="Phosphoserine" evidence="1">
    <location>
        <position position="13"/>
    </location>
</feature>
<feature type="modified residue" description="Phosphoserine" evidence="5">
    <location>
        <position position="24"/>
    </location>
</feature>
<feature type="modified residue" description="Phosphoserine" evidence="5">
    <location>
        <position position="27"/>
    </location>
</feature>
<feature type="modified residue" description="Phosphoserine" evidence="5">
    <location>
        <position position="32"/>
    </location>
</feature>
<feature type="modified residue" description="Phosphoserine" evidence="5">
    <location>
        <position position="48"/>
    </location>
</feature>
<feature type="modified residue" description="Phosphoserine" evidence="5">
    <location>
        <position position="436"/>
    </location>
</feature>
<feature type="cross-link" description="Glycyl lysine isopeptide (Lys-Gly) (interchain with G-Cter in SUMO2)" evidence="1">
    <location>
        <position position="268"/>
    </location>
</feature>
<feature type="cross-link" description="Glycyl lysine isopeptide (Lys-Gly) (interchain with G-Cter in SUMO2)" evidence="1">
    <location>
        <position position="343"/>
    </location>
</feature>
<feature type="splice variant" id="VSP_022707" description="In isoform 2." evidence="3 4">
    <location>
        <begin position="1"/>
        <end position="230"/>
    </location>
</feature>
<gene>
    <name type="primary">Msantd2</name>
</gene>
<proteinExistence type="evidence at protein level"/>
<comment type="alternative products">
    <event type="alternative splicing"/>
    <isoform>
        <id>Q6NZR2-1</id>
        <name>1</name>
        <sequence type="displayed"/>
    </isoform>
    <isoform>
        <id>Q6NZR2-2</id>
        <name>2</name>
        <sequence type="described" ref="VSP_022707"/>
    </isoform>
</comment>
<protein>
    <recommendedName>
        <fullName>Myb/SANT-like DNA-binding domain-containing protein 2</fullName>
    </recommendedName>
</protein>
<organism>
    <name type="scientific">Mus musculus</name>
    <name type="common">Mouse</name>
    <dbReference type="NCBI Taxonomy" id="10090"/>
    <lineage>
        <taxon>Eukaryota</taxon>
        <taxon>Metazoa</taxon>
        <taxon>Chordata</taxon>
        <taxon>Craniata</taxon>
        <taxon>Vertebrata</taxon>
        <taxon>Euteleostomi</taxon>
        <taxon>Mammalia</taxon>
        <taxon>Eutheria</taxon>
        <taxon>Euarchontoglires</taxon>
        <taxon>Glires</taxon>
        <taxon>Rodentia</taxon>
        <taxon>Myomorpha</taxon>
        <taxon>Muroidea</taxon>
        <taxon>Muridae</taxon>
        <taxon>Murinae</taxon>
        <taxon>Mus</taxon>
        <taxon>Mus</taxon>
    </lineage>
</organism>
<reference key="1">
    <citation type="journal article" date="2005" name="Science">
        <title>The transcriptional landscape of the mammalian genome.</title>
        <authorList>
            <person name="Carninci P."/>
            <person name="Kasukawa T."/>
            <person name="Katayama S."/>
            <person name="Gough J."/>
            <person name="Frith M.C."/>
            <person name="Maeda N."/>
            <person name="Oyama R."/>
            <person name="Ravasi T."/>
            <person name="Lenhard B."/>
            <person name="Wells C."/>
            <person name="Kodzius R."/>
            <person name="Shimokawa K."/>
            <person name="Bajic V.B."/>
            <person name="Brenner S.E."/>
            <person name="Batalov S."/>
            <person name="Forrest A.R."/>
            <person name="Zavolan M."/>
            <person name="Davis M.J."/>
            <person name="Wilming L.G."/>
            <person name="Aidinis V."/>
            <person name="Allen J.E."/>
            <person name="Ambesi-Impiombato A."/>
            <person name="Apweiler R."/>
            <person name="Aturaliya R.N."/>
            <person name="Bailey T.L."/>
            <person name="Bansal M."/>
            <person name="Baxter L."/>
            <person name="Beisel K.W."/>
            <person name="Bersano T."/>
            <person name="Bono H."/>
            <person name="Chalk A.M."/>
            <person name="Chiu K.P."/>
            <person name="Choudhary V."/>
            <person name="Christoffels A."/>
            <person name="Clutterbuck D.R."/>
            <person name="Crowe M.L."/>
            <person name="Dalla E."/>
            <person name="Dalrymple B.P."/>
            <person name="de Bono B."/>
            <person name="Della Gatta G."/>
            <person name="di Bernardo D."/>
            <person name="Down T."/>
            <person name="Engstrom P."/>
            <person name="Fagiolini M."/>
            <person name="Faulkner G."/>
            <person name="Fletcher C.F."/>
            <person name="Fukushima T."/>
            <person name="Furuno M."/>
            <person name="Futaki S."/>
            <person name="Gariboldi M."/>
            <person name="Georgii-Hemming P."/>
            <person name="Gingeras T.R."/>
            <person name="Gojobori T."/>
            <person name="Green R.E."/>
            <person name="Gustincich S."/>
            <person name="Harbers M."/>
            <person name="Hayashi Y."/>
            <person name="Hensch T.K."/>
            <person name="Hirokawa N."/>
            <person name="Hill D."/>
            <person name="Huminiecki L."/>
            <person name="Iacono M."/>
            <person name="Ikeo K."/>
            <person name="Iwama A."/>
            <person name="Ishikawa T."/>
            <person name="Jakt M."/>
            <person name="Kanapin A."/>
            <person name="Katoh M."/>
            <person name="Kawasawa Y."/>
            <person name="Kelso J."/>
            <person name="Kitamura H."/>
            <person name="Kitano H."/>
            <person name="Kollias G."/>
            <person name="Krishnan S.P."/>
            <person name="Kruger A."/>
            <person name="Kummerfeld S.K."/>
            <person name="Kurochkin I.V."/>
            <person name="Lareau L.F."/>
            <person name="Lazarevic D."/>
            <person name="Lipovich L."/>
            <person name="Liu J."/>
            <person name="Liuni S."/>
            <person name="McWilliam S."/>
            <person name="Madan Babu M."/>
            <person name="Madera M."/>
            <person name="Marchionni L."/>
            <person name="Matsuda H."/>
            <person name="Matsuzawa S."/>
            <person name="Miki H."/>
            <person name="Mignone F."/>
            <person name="Miyake S."/>
            <person name="Morris K."/>
            <person name="Mottagui-Tabar S."/>
            <person name="Mulder N."/>
            <person name="Nakano N."/>
            <person name="Nakauchi H."/>
            <person name="Ng P."/>
            <person name="Nilsson R."/>
            <person name="Nishiguchi S."/>
            <person name="Nishikawa S."/>
            <person name="Nori F."/>
            <person name="Ohara O."/>
            <person name="Okazaki Y."/>
            <person name="Orlando V."/>
            <person name="Pang K.C."/>
            <person name="Pavan W.J."/>
            <person name="Pavesi G."/>
            <person name="Pesole G."/>
            <person name="Petrovsky N."/>
            <person name="Piazza S."/>
            <person name="Reed J."/>
            <person name="Reid J.F."/>
            <person name="Ring B.Z."/>
            <person name="Ringwald M."/>
            <person name="Rost B."/>
            <person name="Ruan Y."/>
            <person name="Salzberg S.L."/>
            <person name="Sandelin A."/>
            <person name="Schneider C."/>
            <person name="Schoenbach C."/>
            <person name="Sekiguchi K."/>
            <person name="Semple C.A."/>
            <person name="Seno S."/>
            <person name="Sessa L."/>
            <person name="Sheng Y."/>
            <person name="Shibata Y."/>
            <person name="Shimada H."/>
            <person name="Shimada K."/>
            <person name="Silva D."/>
            <person name="Sinclair B."/>
            <person name="Sperling S."/>
            <person name="Stupka E."/>
            <person name="Sugiura K."/>
            <person name="Sultana R."/>
            <person name="Takenaka Y."/>
            <person name="Taki K."/>
            <person name="Tammoja K."/>
            <person name="Tan S.L."/>
            <person name="Tang S."/>
            <person name="Taylor M.S."/>
            <person name="Tegner J."/>
            <person name="Teichmann S.A."/>
            <person name="Ueda H.R."/>
            <person name="van Nimwegen E."/>
            <person name="Verardo R."/>
            <person name="Wei C.L."/>
            <person name="Yagi K."/>
            <person name="Yamanishi H."/>
            <person name="Zabarovsky E."/>
            <person name="Zhu S."/>
            <person name="Zimmer A."/>
            <person name="Hide W."/>
            <person name="Bult C."/>
            <person name="Grimmond S.M."/>
            <person name="Teasdale R.D."/>
            <person name="Liu E.T."/>
            <person name="Brusic V."/>
            <person name="Quackenbush J."/>
            <person name="Wahlestedt C."/>
            <person name="Mattick J.S."/>
            <person name="Hume D.A."/>
            <person name="Kai C."/>
            <person name="Sasaki D."/>
            <person name="Tomaru Y."/>
            <person name="Fukuda S."/>
            <person name="Kanamori-Katayama M."/>
            <person name="Suzuki M."/>
            <person name="Aoki J."/>
            <person name="Arakawa T."/>
            <person name="Iida J."/>
            <person name="Imamura K."/>
            <person name="Itoh M."/>
            <person name="Kato T."/>
            <person name="Kawaji H."/>
            <person name="Kawagashira N."/>
            <person name="Kawashima T."/>
            <person name="Kojima M."/>
            <person name="Kondo S."/>
            <person name="Konno H."/>
            <person name="Nakano K."/>
            <person name="Ninomiya N."/>
            <person name="Nishio T."/>
            <person name="Okada M."/>
            <person name="Plessy C."/>
            <person name="Shibata K."/>
            <person name="Shiraki T."/>
            <person name="Suzuki S."/>
            <person name="Tagami M."/>
            <person name="Waki K."/>
            <person name="Watahiki A."/>
            <person name="Okamura-Oho Y."/>
            <person name="Suzuki H."/>
            <person name="Kawai J."/>
            <person name="Hayashizaki Y."/>
        </authorList>
    </citation>
    <scope>NUCLEOTIDE SEQUENCE [LARGE SCALE MRNA] (ISOFORM 2)</scope>
    <source>
        <strain>NOD</strain>
        <tissue>Thymus</tissue>
    </source>
</reference>
<reference key="2">
    <citation type="journal article" date="2004" name="Genome Res.">
        <title>The status, quality, and expansion of the NIH full-length cDNA project: the Mammalian Gene Collection (MGC).</title>
        <authorList>
            <consortium name="The MGC Project Team"/>
        </authorList>
    </citation>
    <scope>NUCLEOTIDE SEQUENCE [LARGE SCALE MRNA] (ISOFORMS 1 AND 2)</scope>
    <source>
        <strain>C57BL/6J</strain>
        <strain>FVB/N</strain>
        <tissue>Brain</tissue>
        <tissue>Mammary tumor</tissue>
    </source>
</reference>
<reference key="3">
    <citation type="journal article" date="2007" name="Proc. Natl. Acad. Sci. U.S.A.">
        <title>Large-scale phosphorylation analysis of mouse liver.</title>
        <authorList>
            <person name="Villen J."/>
            <person name="Beausoleil S.A."/>
            <person name="Gerber S.A."/>
            <person name="Gygi S.P."/>
        </authorList>
    </citation>
    <scope>IDENTIFICATION BY MASS SPECTROMETRY [LARGE SCALE ANALYSIS]</scope>
    <source>
        <tissue>Liver</tissue>
    </source>
</reference>
<reference key="4">
    <citation type="journal article" date="2010" name="Cell">
        <title>A tissue-specific atlas of mouse protein phosphorylation and expression.</title>
        <authorList>
            <person name="Huttlin E.L."/>
            <person name="Jedrychowski M.P."/>
            <person name="Elias J.E."/>
            <person name="Goswami T."/>
            <person name="Rad R."/>
            <person name="Beausoleil S.A."/>
            <person name="Villen J."/>
            <person name="Haas W."/>
            <person name="Sowa M.E."/>
            <person name="Gygi S.P."/>
        </authorList>
    </citation>
    <scope>PHOSPHORYLATION [LARGE SCALE ANALYSIS] AT SER-24; SER-27; SER-32; SER-48 AND SER-436</scope>
    <scope>IDENTIFICATION BY MASS SPECTROMETRY [LARGE SCALE ANALYSIS]</scope>
    <source>
        <tissue>Kidney</tissue>
        <tissue>Lung</tissue>
        <tissue>Pancreas</tissue>
        <tissue>Spleen</tissue>
    </source>
</reference>
<accession>Q6NZR2</accession>
<accession>Q8R3V3</accession>
<dbReference type="EMBL" id="AK153989">
    <property type="protein sequence ID" value="BAE32299.1"/>
    <property type="molecule type" value="mRNA"/>
</dbReference>
<dbReference type="EMBL" id="BC024479">
    <property type="protein sequence ID" value="AAH24479.1"/>
    <property type="molecule type" value="mRNA"/>
</dbReference>
<dbReference type="EMBL" id="BC066002">
    <property type="protein sequence ID" value="AAH66002.1"/>
    <property type="molecule type" value="mRNA"/>
</dbReference>
<dbReference type="CCDS" id="CCDS22978.1">
    <molecule id="Q6NZR2-1"/>
</dbReference>
<dbReference type="RefSeq" id="NP_666334.2">
    <molecule id="Q6NZR2-1"/>
    <property type="nucleotide sequence ID" value="NM_146222.2"/>
</dbReference>
<dbReference type="RefSeq" id="XP_006510295.1">
    <molecule id="Q6NZR2-2"/>
    <property type="nucleotide sequence ID" value="XM_006510232.5"/>
</dbReference>
<dbReference type="RefSeq" id="XP_006510296.1">
    <property type="nucleotide sequence ID" value="XM_006510233.3"/>
</dbReference>
<dbReference type="RefSeq" id="XP_030100154.1">
    <molecule id="Q6NZR2-2"/>
    <property type="nucleotide sequence ID" value="XM_030244294.2"/>
</dbReference>
<dbReference type="RefSeq" id="XP_036010774.1">
    <molecule id="Q6NZR2-2"/>
    <property type="nucleotide sequence ID" value="XM_036154881.1"/>
</dbReference>
<dbReference type="BioGRID" id="231628">
    <property type="interactions" value="2"/>
</dbReference>
<dbReference type="FunCoup" id="Q6NZR2">
    <property type="interactions" value="535"/>
</dbReference>
<dbReference type="IntAct" id="Q6NZR2">
    <property type="interactions" value="1"/>
</dbReference>
<dbReference type="STRING" id="10090.ENSMUSP00000043329"/>
<dbReference type="iPTMnet" id="Q6NZR2"/>
<dbReference type="PhosphoSitePlus" id="Q6NZR2"/>
<dbReference type="jPOST" id="Q6NZR2"/>
<dbReference type="PaxDb" id="10090-ENSMUSP00000043329"/>
<dbReference type="PeptideAtlas" id="Q6NZR2"/>
<dbReference type="ProteomicsDB" id="291445">
    <molecule id="Q6NZR2-1"/>
</dbReference>
<dbReference type="ProteomicsDB" id="291446">
    <molecule id="Q6NZR2-2"/>
</dbReference>
<dbReference type="Pumba" id="Q6NZR2"/>
<dbReference type="Antibodypedia" id="49903">
    <property type="antibodies" value="27 antibodies from 10 providers"/>
</dbReference>
<dbReference type="DNASU" id="235184"/>
<dbReference type="Ensembl" id="ENSMUST00000048604.8">
    <molecule id="Q6NZR2-1"/>
    <property type="protein sequence ID" value="ENSMUSP00000043329.7"/>
    <property type="gene ID" value="ENSMUSG00000042138.10"/>
</dbReference>
<dbReference type="Ensembl" id="ENSMUST00000239463.2">
    <molecule id="Q6NZR2-1"/>
    <property type="protein sequence ID" value="ENSMUSP00000159374.2"/>
    <property type="gene ID" value="ENSMUSG00000042138.10"/>
</dbReference>
<dbReference type="GeneID" id="235184"/>
<dbReference type="KEGG" id="mmu:235184"/>
<dbReference type="UCSC" id="uc009ouy.1">
    <molecule id="Q6NZR2-1"/>
    <property type="organism name" value="mouse"/>
</dbReference>
<dbReference type="AGR" id="MGI:2384579"/>
<dbReference type="CTD" id="79684"/>
<dbReference type="MGI" id="MGI:2384579">
    <property type="gene designation" value="Msantd2"/>
</dbReference>
<dbReference type="VEuPathDB" id="HostDB:ENSMUSG00000042138"/>
<dbReference type="eggNOG" id="ENOG502QU4E">
    <property type="taxonomic scope" value="Eukaryota"/>
</dbReference>
<dbReference type="GeneTree" id="ENSGT00390000013593"/>
<dbReference type="HOGENOM" id="CLU_028535_1_0_1"/>
<dbReference type="InParanoid" id="Q6NZR2"/>
<dbReference type="OMA" id="NTRWRDD"/>
<dbReference type="PhylomeDB" id="Q6NZR2"/>
<dbReference type="TreeFam" id="TF331593"/>
<dbReference type="BioGRID-ORCS" id="235184">
    <property type="hits" value="1 hit in 78 CRISPR screens"/>
</dbReference>
<dbReference type="ChiTaRS" id="Msantd2">
    <property type="organism name" value="mouse"/>
</dbReference>
<dbReference type="PRO" id="PR:Q6NZR2"/>
<dbReference type="Proteomes" id="UP000000589">
    <property type="component" value="Chromosome 9"/>
</dbReference>
<dbReference type="RNAct" id="Q6NZR2">
    <property type="molecule type" value="protein"/>
</dbReference>
<dbReference type="Bgee" id="ENSMUSG00000042138">
    <property type="expression patterns" value="Expressed in retinal neural layer and 252 other cell types or tissues"/>
</dbReference>
<dbReference type="ExpressionAtlas" id="Q6NZR2">
    <property type="expression patterns" value="baseline and differential"/>
</dbReference>
<dbReference type="Gene3D" id="1.10.10.60">
    <property type="entry name" value="Homeodomain-like"/>
    <property type="match status" value="1"/>
</dbReference>
<dbReference type="InterPro" id="IPR042792">
    <property type="entry name" value="MSANTD2"/>
</dbReference>
<dbReference type="InterPro" id="IPR044822">
    <property type="entry name" value="Myb_DNA-bind_4"/>
</dbReference>
<dbReference type="PANTHER" id="PTHR46933">
    <property type="entry name" value="MYB/SANT-LIKE DNA-BINDING DOMAIN-CONTAINING PROTEIN 2"/>
    <property type="match status" value="1"/>
</dbReference>
<dbReference type="PANTHER" id="PTHR46933:SF1">
    <property type="entry name" value="MYB_SANT-LIKE DNA-BINDING DOMAIN-CONTAINING PROTEIN 2"/>
    <property type="match status" value="1"/>
</dbReference>
<dbReference type="Pfam" id="PF13837">
    <property type="entry name" value="Myb_DNA-bind_4"/>
    <property type="match status" value="1"/>
</dbReference>
<name>MSD2_MOUSE</name>